<name>H2A_HIPHI</name>
<protein>
    <recommendedName>
        <fullName>Histone H2A</fullName>
    </recommendedName>
    <component>
        <recommendedName>
            <fullName>Hipposin</fullName>
        </recommendedName>
    </component>
</protein>
<reference key="1">
    <citation type="journal article" date="2003" name="Biochim. Biophys. Acta">
        <title>Hipposin, a histone-derived antimicrobial peptide in Atlantic halibut (Hippoglossus hippoglossus L.).</title>
        <authorList>
            <person name="Birkemo G.A."/>
            <person name="Lueders T."/>
            <person name="Andersen O."/>
            <person name="Nes I.F."/>
            <person name="Nissen-Meyer J."/>
        </authorList>
    </citation>
    <scope>PROTEIN SEQUENCE OF 2-52</scope>
    <scope>ACETYLATION AT SER-2</scope>
    <scope>SYNTHESIS</scope>
    <scope>FUNCTION</scope>
    <scope>MASS SPECTROMETRY</scope>
    <source>
        <tissue>Skin</tissue>
    </source>
</reference>
<feature type="initiator methionine" description="Removed" evidence="5">
    <location>
        <position position="1"/>
    </location>
</feature>
<feature type="chain" id="PRO_0000013166" description="Hipposin">
    <location>
        <begin position="2"/>
        <end position="52"/>
    </location>
</feature>
<feature type="region of interest" description="Disordered" evidence="4">
    <location>
        <begin position="1"/>
        <end position="25"/>
    </location>
</feature>
<feature type="compositionally biased region" description="Basic residues" evidence="4">
    <location>
        <begin position="7"/>
        <end position="19"/>
    </location>
</feature>
<feature type="modified residue" description="N-acetylserine" evidence="5">
    <location>
        <position position="2"/>
    </location>
</feature>
<feature type="modified residue" description="Phosphoserine" evidence="1">
    <location>
        <position position="2"/>
    </location>
</feature>
<feature type="modified residue" description="N6-(2-hydroxyisobutyryl)lysine" evidence="3">
    <location>
        <position position="6"/>
    </location>
</feature>
<feature type="modified residue" description="N6-acetyllysine" evidence="1">
    <location>
        <position position="6"/>
    </location>
</feature>
<feature type="modified residue" description="N6-(2-hydroxyisobutyryl)lysine; alternate" evidence="3">
    <location>
        <position position="10"/>
    </location>
</feature>
<feature type="modified residue" description="N6-lactoyllysine; alternate" evidence="2">
    <location>
        <position position="10"/>
    </location>
</feature>
<feature type="modified residue" description="N6-succinyllysine" evidence="3">
    <location>
        <position position="10"/>
    </location>
</feature>
<feature type="modified residue" description="N6-(2-hydroxyisobutyryl)lysine; alternate" evidence="3">
    <location>
        <position position="37"/>
    </location>
</feature>
<feature type="cross-link" description="Glycyl lysine isopeptide (Lys-Gly) (interchain with G-Cter in ubiquitin)" evidence="1">
    <location>
        <position position="14"/>
    </location>
</feature>
<feature type="cross-link" description="Glycyl lysine isopeptide (Lys-Gly) (interchain with G-Cter in ubiquitin)" evidence="1">
    <location>
        <position position="16"/>
    </location>
</feature>
<feature type="non-terminal residue">
    <location>
        <position position="52"/>
    </location>
</feature>
<organism>
    <name type="scientific">Hippoglossus hippoglossus</name>
    <name type="common">Atlantic halibut</name>
    <name type="synonym">Pleuronectes hippoglossus</name>
    <dbReference type="NCBI Taxonomy" id="8267"/>
    <lineage>
        <taxon>Eukaryota</taxon>
        <taxon>Metazoa</taxon>
        <taxon>Chordata</taxon>
        <taxon>Craniata</taxon>
        <taxon>Vertebrata</taxon>
        <taxon>Euteleostomi</taxon>
        <taxon>Actinopterygii</taxon>
        <taxon>Neopterygii</taxon>
        <taxon>Teleostei</taxon>
        <taxon>Neoteleostei</taxon>
        <taxon>Acanthomorphata</taxon>
        <taxon>Carangaria</taxon>
        <taxon>Pleuronectiformes</taxon>
        <taxon>Pleuronectoidei</taxon>
        <taxon>Pleuronectidae</taxon>
        <taxon>Hippoglossus</taxon>
    </lineage>
</organism>
<accession>P59890</accession>
<comment type="function">
    <text evidence="5">Core component of nucleosome. Nucleosomes wrap and compact DNA into chromatin, limiting DNA accessibility to the cellular machineries which require DNA as a template. Histones thereby play a central role in transcription regulation, DNA repair, DNA replication and chromosomal stability. DNA accessibility is regulated via a complex set of post-translational modifications of histones, also called histone code, and nucleosome remodeling.</text>
</comment>
<comment type="function">
    <text evidence="5">Hipposin shows strong antimicrobial activity against several Gram-positive and Gram-negative bacteria.</text>
</comment>
<comment type="subunit">
    <text>The nucleosome is a histone octamer containing two molecules each of H2A, H2B, H3 and H4 assembled in one H3-H4 heterotetramer and two H2A-H2B heterodimers. The octamer wraps approximately 147 bp of DNA.</text>
</comment>
<comment type="subcellular location">
    <subcellularLocation>
        <location>Nucleus</location>
    </subcellularLocation>
    <subcellularLocation>
        <location>Chromosome</location>
    </subcellularLocation>
</comment>
<comment type="subcellular location">
    <molecule>Hipposin</molecule>
    <subcellularLocation>
        <location>Secreted</location>
    </subcellularLocation>
</comment>
<comment type="PTM">
    <text>Acetylation is not necessary for the antibacterial activity.</text>
</comment>
<comment type="PTM">
    <text evidence="1">Monoubiquitination in C-terminus gives a specific tag for epigenetic transcriptional repression. Following DNA double-strand breaks (DSBs), it is ubiquitinated through 'Lys-63' linkage of ubiquitin moieties, leading to the recruitment of repair proteins to sites of DNA damage. H2AK119Ub and ionizing radiation-induced 'Lys-63'-linked ubiquitination are distinct events (By similarity).</text>
</comment>
<comment type="PTM">
    <text evidence="1">Phosphorylation on Ser-2 is enhanced during mitosis. Phosphorylation on Ser-2 directly represses transcription (By similarity).</text>
</comment>
<comment type="mass spectrometry" mass="5459.0" method="MALDI" evidence="5"/>
<comment type="similarity">
    <text evidence="6">Belongs to the histone H2A family.</text>
</comment>
<evidence type="ECO:0000250" key="1"/>
<evidence type="ECO:0000250" key="2">
    <source>
        <dbReference type="UniProtKB" id="P0C0S5"/>
    </source>
</evidence>
<evidence type="ECO:0000250" key="3">
    <source>
        <dbReference type="UniProtKB" id="P0C0S8"/>
    </source>
</evidence>
<evidence type="ECO:0000256" key="4">
    <source>
        <dbReference type="SAM" id="MobiDB-lite"/>
    </source>
</evidence>
<evidence type="ECO:0000269" key="5">
    <source>
    </source>
</evidence>
<evidence type="ECO:0000305" key="6"/>
<keyword id="KW-0007">Acetylation</keyword>
<keyword id="KW-0044">Antibiotic</keyword>
<keyword id="KW-0929">Antimicrobial</keyword>
<keyword id="KW-0158">Chromosome</keyword>
<keyword id="KW-0903">Direct protein sequencing</keyword>
<keyword id="KW-0238">DNA-binding</keyword>
<keyword id="KW-0379">Hydroxylation</keyword>
<keyword id="KW-1017">Isopeptide bond</keyword>
<keyword id="KW-0544">Nucleosome core</keyword>
<keyword id="KW-0539">Nucleus</keyword>
<keyword id="KW-0597">Phosphoprotein</keyword>
<keyword id="KW-0964">Secreted</keyword>
<keyword id="KW-0832">Ubl conjugation</keyword>
<sequence length="52" mass="5547">MSGRGKTGGKARAKAKTRSSRAGLQFPVGRVHRLLRKGNYAHRVGAGAPVYL</sequence>
<proteinExistence type="evidence at protein level"/>
<dbReference type="SMR" id="P59890"/>
<dbReference type="iPTMnet" id="P59890"/>
<dbReference type="GO" id="GO:0005576">
    <property type="term" value="C:extracellular region"/>
    <property type="evidence" value="ECO:0007669"/>
    <property type="project" value="UniProtKB-SubCell"/>
</dbReference>
<dbReference type="GO" id="GO:0000786">
    <property type="term" value="C:nucleosome"/>
    <property type="evidence" value="ECO:0007669"/>
    <property type="project" value="UniProtKB-KW"/>
</dbReference>
<dbReference type="GO" id="GO:0005634">
    <property type="term" value="C:nucleus"/>
    <property type="evidence" value="ECO:0007669"/>
    <property type="project" value="UniProtKB-SubCell"/>
</dbReference>
<dbReference type="GO" id="GO:0003677">
    <property type="term" value="F:DNA binding"/>
    <property type="evidence" value="ECO:0007669"/>
    <property type="project" value="UniProtKB-KW"/>
</dbReference>
<dbReference type="GO" id="GO:0046982">
    <property type="term" value="F:protein heterodimerization activity"/>
    <property type="evidence" value="ECO:0007669"/>
    <property type="project" value="InterPro"/>
</dbReference>
<dbReference type="GO" id="GO:0030527">
    <property type="term" value="F:structural constituent of chromatin"/>
    <property type="evidence" value="ECO:0007669"/>
    <property type="project" value="InterPro"/>
</dbReference>
<dbReference type="GO" id="GO:0042742">
    <property type="term" value="P:defense response to bacterium"/>
    <property type="evidence" value="ECO:0007669"/>
    <property type="project" value="UniProtKB-KW"/>
</dbReference>
<dbReference type="Gene3D" id="1.10.20.10">
    <property type="entry name" value="Histone, subunit A"/>
    <property type="match status" value="1"/>
</dbReference>
<dbReference type="InterPro" id="IPR009072">
    <property type="entry name" value="Histone-fold"/>
</dbReference>
<dbReference type="InterPro" id="IPR002119">
    <property type="entry name" value="Histone_H2A"/>
</dbReference>
<dbReference type="InterPro" id="IPR032458">
    <property type="entry name" value="Histone_H2A_CS"/>
</dbReference>
<dbReference type="PANTHER" id="PTHR23430">
    <property type="entry name" value="HISTONE H2A"/>
    <property type="match status" value="1"/>
</dbReference>
<dbReference type="PRINTS" id="PR00620">
    <property type="entry name" value="HISTONEH2A"/>
</dbReference>
<dbReference type="SUPFAM" id="SSF47113">
    <property type="entry name" value="Histone-fold"/>
    <property type="match status" value="1"/>
</dbReference>
<dbReference type="PROSITE" id="PS00046">
    <property type="entry name" value="HISTONE_H2A"/>
    <property type="match status" value="1"/>
</dbReference>